<name>DPO3B_STAAM</name>
<protein>
    <recommendedName>
        <fullName>Beta sliding clamp</fullName>
        <shortName>Beta clamp</shortName>
        <shortName>Sliding clamp</shortName>
    </recommendedName>
    <alternativeName>
        <fullName>Beta-clamp processivity factor</fullName>
    </alternativeName>
    <alternativeName>
        <fullName>DNA polymerase III beta sliding clamp subunit</fullName>
    </alternativeName>
    <alternativeName>
        <fullName>DNA polymerase III subunit beta</fullName>
    </alternativeName>
</protein>
<feature type="chain" id="PRO_0000105463" description="Beta sliding clamp">
    <location>
        <begin position="1"/>
        <end position="377"/>
    </location>
</feature>
<comment type="function">
    <text evidence="1">Confers DNA tethering and processivity to DNA polymerases and other proteins. Acts as a clamp, forming a ring around DNA (a reaction catalyzed by the clamp-loading complex) which diffuses in an ATP-independent manner freely and bidirectionally along dsDNA. Initially characterized for its ability to contact the catalytic subunit of DNA polymerase III (Pol III), a complex, multichain enzyme responsible for most of the replicative synthesis in bacteria; Pol III exhibits 3'-5' exonuclease proofreading activity. The beta chain is required for initiation of replication as well as for processivity of DNA replication.</text>
</comment>
<comment type="subunit">
    <text evidence="1">Forms a ring-shaped head-to-tail homodimer around DNA which binds and tethers DNA polymerases and other proteins to the DNA. The DNA replisome complex has a single clamp-loading complex (3 tau and 1 each of delta, delta', psi and chi subunits) which binds 3 Pol III cores (1 core on the leading strand and 2 on the lagging strand) each with a beta sliding clamp dimer. Additional proteins in the replisome are other copies of gamma, psi and chi, Ssb, DNA helicase and RNA primase.</text>
</comment>
<comment type="subcellular location">
    <subcellularLocation>
        <location evidence="1">Cytoplasm</location>
    </subcellularLocation>
</comment>
<comment type="similarity">
    <text evidence="2">Belongs to the beta sliding clamp family.</text>
</comment>
<organism>
    <name type="scientific">Staphylococcus aureus (strain Mu50 / ATCC 700699)</name>
    <dbReference type="NCBI Taxonomy" id="158878"/>
    <lineage>
        <taxon>Bacteria</taxon>
        <taxon>Bacillati</taxon>
        <taxon>Bacillota</taxon>
        <taxon>Bacilli</taxon>
        <taxon>Bacillales</taxon>
        <taxon>Staphylococcaceae</taxon>
        <taxon>Staphylococcus</taxon>
    </lineage>
</organism>
<dbReference type="EMBL" id="BA000017">
    <property type="protein sequence ID" value="BAB56164.1"/>
    <property type="molecule type" value="Genomic_DNA"/>
</dbReference>
<dbReference type="RefSeq" id="WP_000969811.1">
    <property type="nucleotide sequence ID" value="NC_002758.2"/>
</dbReference>
<dbReference type="SMR" id="P0A022"/>
<dbReference type="KEGG" id="sav:SAV0002"/>
<dbReference type="HOGENOM" id="CLU_038149_2_0_9"/>
<dbReference type="PhylomeDB" id="P0A022"/>
<dbReference type="Proteomes" id="UP000002481">
    <property type="component" value="Chromosome"/>
</dbReference>
<dbReference type="GO" id="GO:0005737">
    <property type="term" value="C:cytoplasm"/>
    <property type="evidence" value="ECO:0007669"/>
    <property type="project" value="UniProtKB-SubCell"/>
</dbReference>
<dbReference type="GO" id="GO:0009360">
    <property type="term" value="C:DNA polymerase III complex"/>
    <property type="evidence" value="ECO:0007669"/>
    <property type="project" value="InterPro"/>
</dbReference>
<dbReference type="GO" id="GO:0008408">
    <property type="term" value="F:3'-5' exonuclease activity"/>
    <property type="evidence" value="ECO:0007669"/>
    <property type="project" value="InterPro"/>
</dbReference>
<dbReference type="GO" id="GO:0003677">
    <property type="term" value="F:DNA binding"/>
    <property type="evidence" value="ECO:0007669"/>
    <property type="project" value="UniProtKB-KW"/>
</dbReference>
<dbReference type="GO" id="GO:0003887">
    <property type="term" value="F:DNA-directed DNA polymerase activity"/>
    <property type="evidence" value="ECO:0007669"/>
    <property type="project" value="UniProtKB-KW"/>
</dbReference>
<dbReference type="GO" id="GO:0006271">
    <property type="term" value="P:DNA strand elongation involved in DNA replication"/>
    <property type="evidence" value="ECO:0007669"/>
    <property type="project" value="TreeGrafter"/>
</dbReference>
<dbReference type="CDD" id="cd00140">
    <property type="entry name" value="beta_clamp"/>
    <property type="match status" value="1"/>
</dbReference>
<dbReference type="FunFam" id="3.10.150.10:FF:000007">
    <property type="entry name" value="Beta sliding clamp"/>
    <property type="match status" value="1"/>
</dbReference>
<dbReference type="Gene3D" id="3.70.10.10">
    <property type="match status" value="1"/>
</dbReference>
<dbReference type="Gene3D" id="3.10.150.10">
    <property type="entry name" value="DNA Polymerase III, subunit A, domain 2"/>
    <property type="match status" value="1"/>
</dbReference>
<dbReference type="InterPro" id="IPR046938">
    <property type="entry name" value="DNA_clamp_sf"/>
</dbReference>
<dbReference type="InterPro" id="IPR001001">
    <property type="entry name" value="DNA_polIII_beta"/>
</dbReference>
<dbReference type="InterPro" id="IPR022635">
    <property type="entry name" value="DNA_polIII_beta_C"/>
</dbReference>
<dbReference type="InterPro" id="IPR022637">
    <property type="entry name" value="DNA_polIII_beta_cen"/>
</dbReference>
<dbReference type="InterPro" id="IPR022634">
    <property type="entry name" value="DNA_polIII_beta_N"/>
</dbReference>
<dbReference type="NCBIfam" id="TIGR00663">
    <property type="entry name" value="dnan"/>
    <property type="match status" value="1"/>
</dbReference>
<dbReference type="PANTHER" id="PTHR30478:SF0">
    <property type="entry name" value="BETA SLIDING CLAMP"/>
    <property type="match status" value="1"/>
</dbReference>
<dbReference type="PANTHER" id="PTHR30478">
    <property type="entry name" value="DNA POLYMERASE III SUBUNIT BETA"/>
    <property type="match status" value="1"/>
</dbReference>
<dbReference type="Pfam" id="PF00712">
    <property type="entry name" value="DNA_pol3_beta"/>
    <property type="match status" value="1"/>
</dbReference>
<dbReference type="Pfam" id="PF02767">
    <property type="entry name" value="DNA_pol3_beta_2"/>
    <property type="match status" value="1"/>
</dbReference>
<dbReference type="Pfam" id="PF02768">
    <property type="entry name" value="DNA_pol3_beta_3"/>
    <property type="match status" value="1"/>
</dbReference>
<dbReference type="PIRSF" id="PIRSF000804">
    <property type="entry name" value="DNA_pol_III_b"/>
    <property type="match status" value="1"/>
</dbReference>
<dbReference type="SMART" id="SM00480">
    <property type="entry name" value="POL3Bc"/>
    <property type="match status" value="1"/>
</dbReference>
<dbReference type="SUPFAM" id="SSF55979">
    <property type="entry name" value="DNA clamp"/>
    <property type="match status" value="3"/>
</dbReference>
<evidence type="ECO:0000250" key="1">
    <source>
        <dbReference type="UniProtKB" id="P0A988"/>
    </source>
</evidence>
<evidence type="ECO:0000305" key="2"/>
<proteinExistence type="inferred from homology"/>
<gene>
    <name type="primary">dnaN</name>
    <name type="ordered locus">SAV0002</name>
</gene>
<sequence length="377" mass="41914">MMEFTIKRDYFITQLNDTLKAISPRTTLPILTGIKIDAKEHEVILTGSDSEISIEITIPKTVDGEDIVNISETGSVVLPGRFFVDIIKKLPGKDVKLSTNEQFQTLITSGHSEFNLSGLDPDQYPLLPQVSRDDAIQLSVKVLKNVIAQTNFAVSTSETRPVLTGVNWLIQENELICTATDSHRLAVRKLQLEDVSENKNVIIPGKALAELNKIMSDNEEDIDIFFASNQVLFKVGNVNFISRLLEGHYPDTTRLFPENYEIKLSIDNGEFYHAIDRASLLAREGGNNVIKLSTGDDVVELSSTSPEIGTVKEEVDANDVEGGSLKISFNSKYMMDALKAIDNDEVEVEFFGTMKPFILKPKGDDSVTQLILPIRTY</sequence>
<reference key="1">
    <citation type="journal article" date="2001" name="Lancet">
        <title>Whole genome sequencing of meticillin-resistant Staphylococcus aureus.</title>
        <authorList>
            <person name="Kuroda M."/>
            <person name="Ohta T."/>
            <person name="Uchiyama I."/>
            <person name="Baba T."/>
            <person name="Yuzawa H."/>
            <person name="Kobayashi I."/>
            <person name="Cui L."/>
            <person name="Oguchi A."/>
            <person name="Aoki K."/>
            <person name="Nagai Y."/>
            <person name="Lian J.-Q."/>
            <person name="Ito T."/>
            <person name="Kanamori M."/>
            <person name="Matsumaru H."/>
            <person name="Maruyama A."/>
            <person name="Murakami H."/>
            <person name="Hosoyama A."/>
            <person name="Mizutani-Ui Y."/>
            <person name="Takahashi N.K."/>
            <person name="Sawano T."/>
            <person name="Inoue R."/>
            <person name="Kaito C."/>
            <person name="Sekimizu K."/>
            <person name="Hirakawa H."/>
            <person name="Kuhara S."/>
            <person name="Goto S."/>
            <person name="Yabuzaki J."/>
            <person name="Kanehisa M."/>
            <person name="Yamashita A."/>
            <person name="Oshima K."/>
            <person name="Furuya K."/>
            <person name="Yoshino C."/>
            <person name="Shiba T."/>
            <person name="Hattori M."/>
            <person name="Ogasawara N."/>
            <person name="Hayashi H."/>
            <person name="Hiramatsu K."/>
        </authorList>
    </citation>
    <scope>NUCLEOTIDE SEQUENCE [LARGE SCALE GENOMIC DNA]</scope>
    <source>
        <strain>Mu50 / ATCC 700699</strain>
    </source>
</reference>
<keyword id="KW-0963">Cytoplasm</keyword>
<keyword id="KW-0235">DNA replication</keyword>
<keyword id="KW-0238">DNA-binding</keyword>
<keyword id="KW-0239">DNA-directed DNA polymerase</keyword>
<keyword id="KW-0548">Nucleotidyltransferase</keyword>
<keyword id="KW-0808">Transferase</keyword>
<accession>P0A022</accession>
<accession>P50029</accession>